<sequence>MSKNHLLQDPFLNELRKEKVPVSVFLVNGIKLHGIIDSFDQYVVMLKNSITQMVYKHAISTVVPSRMVKIPAEESSGEEEGTVAD</sequence>
<feature type="chain" id="PRO_0000095644" description="RNA-binding protein Hfq">
    <location>
        <begin position="1"/>
        <end position="85"/>
    </location>
</feature>
<feature type="domain" description="Sm" evidence="2">
    <location>
        <begin position="9"/>
        <end position="68"/>
    </location>
</feature>
<comment type="function">
    <text evidence="1">RNA chaperone that binds small regulatory RNA (sRNAs) and mRNAs to facilitate mRNA translational regulation in response to envelope stress, environmental stress and changes in metabolite concentrations. Also binds with high specificity to tRNAs.</text>
</comment>
<comment type="subunit">
    <text evidence="1">Homohexamer.</text>
</comment>
<comment type="similarity">
    <text evidence="1">Belongs to the Hfq family.</text>
</comment>
<evidence type="ECO:0000255" key="1">
    <source>
        <dbReference type="HAMAP-Rule" id="MF_00436"/>
    </source>
</evidence>
<evidence type="ECO:0000255" key="2">
    <source>
        <dbReference type="PROSITE-ProRule" id="PRU01346"/>
    </source>
</evidence>
<accession>Q5X982</accession>
<proteinExistence type="inferred from homology"/>
<protein>
    <recommendedName>
        <fullName evidence="1">RNA-binding protein Hfq</fullName>
    </recommendedName>
</protein>
<organism>
    <name type="scientific">Legionella pneumophila (strain Paris)</name>
    <dbReference type="NCBI Taxonomy" id="297246"/>
    <lineage>
        <taxon>Bacteria</taxon>
        <taxon>Pseudomonadati</taxon>
        <taxon>Pseudomonadota</taxon>
        <taxon>Gammaproteobacteria</taxon>
        <taxon>Legionellales</taxon>
        <taxon>Legionellaceae</taxon>
        <taxon>Legionella</taxon>
    </lineage>
</organism>
<gene>
    <name evidence="1" type="primary">hfq</name>
    <name type="ordered locus">lpp0009</name>
</gene>
<keyword id="KW-0694">RNA-binding</keyword>
<keyword id="KW-0346">Stress response</keyword>
<reference key="1">
    <citation type="journal article" date="2004" name="Nat. Genet.">
        <title>Evidence in the Legionella pneumophila genome for exploitation of host cell functions and high genome plasticity.</title>
        <authorList>
            <person name="Cazalet C."/>
            <person name="Rusniok C."/>
            <person name="Brueggemann H."/>
            <person name="Zidane N."/>
            <person name="Magnier A."/>
            <person name="Ma L."/>
            <person name="Tichit M."/>
            <person name="Jarraud S."/>
            <person name="Bouchier C."/>
            <person name="Vandenesch F."/>
            <person name="Kunst F."/>
            <person name="Etienne J."/>
            <person name="Glaser P."/>
            <person name="Buchrieser C."/>
        </authorList>
    </citation>
    <scope>NUCLEOTIDE SEQUENCE [LARGE SCALE GENOMIC DNA]</scope>
    <source>
        <strain>Paris</strain>
    </source>
</reference>
<dbReference type="EMBL" id="CR628336">
    <property type="protein sequence ID" value="CAH11157.1"/>
    <property type="molecule type" value="Genomic_DNA"/>
</dbReference>
<dbReference type="RefSeq" id="WP_010945771.1">
    <property type="nucleotide sequence ID" value="NC_006368.1"/>
</dbReference>
<dbReference type="SMR" id="Q5X982"/>
<dbReference type="GeneID" id="57034015"/>
<dbReference type="KEGG" id="lpp:lpp0009"/>
<dbReference type="LegioList" id="lpp0009"/>
<dbReference type="HOGENOM" id="CLU_113688_2_2_6"/>
<dbReference type="GO" id="GO:0005829">
    <property type="term" value="C:cytosol"/>
    <property type="evidence" value="ECO:0007669"/>
    <property type="project" value="TreeGrafter"/>
</dbReference>
<dbReference type="GO" id="GO:0003723">
    <property type="term" value="F:RNA binding"/>
    <property type="evidence" value="ECO:0007669"/>
    <property type="project" value="UniProtKB-UniRule"/>
</dbReference>
<dbReference type="GO" id="GO:0006355">
    <property type="term" value="P:regulation of DNA-templated transcription"/>
    <property type="evidence" value="ECO:0007669"/>
    <property type="project" value="InterPro"/>
</dbReference>
<dbReference type="GO" id="GO:0043487">
    <property type="term" value="P:regulation of RNA stability"/>
    <property type="evidence" value="ECO:0007669"/>
    <property type="project" value="TreeGrafter"/>
</dbReference>
<dbReference type="GO" id="GO:0045974">
    <property type="term" value="P:regulation of translation, ncRNA-mediated"/>
    <property type="evidence" value="ECO:0007669"/>
    <property type="project" value="TreeGrafter"/>
</dbReference>
<dbReference type="CDD" id="cd01716">
    <property type="entry name" value="Hfq"/>
    <property type="match status" value="1"/>
</dbReference>
<dbReference type="FunFam" id="2.30.30.100:FF:000001">
    <property type="entry name" value="RNA-binding protein Hfq"/>
    <property type="match status" value="1"/>
</dbReference>
<dbReference type="Gene3D" id="2.30.30.100">
    <property type="match status" value="1"/>
</dbReference>
<dbReference type="HAMAP" id="MF_00436">
    <property type="entry name" value="Hfq"/>
    <property type="match status" value="1"/>
</dbReference>
<dbReference type="InterPro" id="IPR005001">
    <property type="entry name" value="Hfq"/>
</dbReference>
<dbReference type="InterPro" id="IPR010920">
    <property type="entry name" value="LSM_dom_sf"/>
</dbReference>
<dbReference type="InterPro" id="IPR047575">
    <property type="entry name" value="Sm"/>
</dbReference>
<dbReference type="NCBIfam" id="TIGR02383">
    <property type="entry name" value="Hfq"/>
    <property type="match status" value="1"/>
</dbReference>
<dbReference type="NCBIfam" id="NF001602">
    <property type="entry name" value="PRK00395.1"/>
    <property type="match status" value="1"/>
</dbReference>
<dbReference type="PANTHER" id="PTHR34772">
    <property type="entry name" value="RNA-BINDING PROTEIN HFQ"/>
    <property type="match status" value="1"/>
</dbReference>
<dbReference type="PANTHER" id="PTHR34772:SF1">
    <property type="entry name" value="RNA-BINDING PROTEIN HFQ"/>
    <property type="match status" value="1"/>
</dbReference>
<dbReference type="Pfam" id="PF17209">
    <property type="entry name" value="Hfq"/>
    <property type="match status" value="1"/>
</dbReference>
<dbReference type="SUPFAM" id="SSF50182">
    <property type="entry name" value="Sm-like ribonucleoproteins"/>
    <property type="match status" value="1"/>
</dbReference>
<dbReference type="PROSITE" id="PS52002">
    <property type="entry name" value="SM"/>
    <property type="match status" value="1"/>
</dbReference>
<name>HFQ_LEGPA</name>